<organism>
    <name type="scientific">Aeromonas salmonicida (strain A449)</name>
    <dbReference type="NCBI Taxonomy" id="382245"/>
    <lineage>
        <taxon>Bacteria</taxon>
        <taxon>Pseudomonadati</taxon>
        <taxon>Pseudomonadota</taxon>
        <taxon>Gammaproteobacteria</taxon>
        <taxon>Aeromonadales</taxon>
        <taxon>Aeromonadaceae</taxon>
        <taxon>Aeromonas</taxon>
    </lineage>
</organism>
<dbReference type="EC" id="2.5.1.141" evidence="1"/>
<dbReference type="EMBL" id="CP000644">
    <property type="protein sequence ID" value="ABO90960.1"/>
    <property type="status" value="ALT_INIT"/>
    <property type="molecule type" value="Genomic_DNA"/>
</dbReference>
<dbReference type="SMR" id="A4SPY8"/>
<dbReference type="STRING" id="29491.GCA_000820065_02277"/>
<dbReference type="KEGG" id="asa:ASA_2957"/>
<dbReference type="eggNOG" id="COG0109">
    <property type="taxonomic scope" value="Bacteria"/>
</dbReference>
<dbReference type="HOGENOM" id="CLU_029631_0_0_6"/>
<dbReference type="UniPathway" id="UPA00834">
    <property type="reaction ID" value="UER00712"/>
</dbReference>
<dbReference type="Proteomes" id="UP000000225">
    <property type="component" value="Chromosome"/>
</dbReference>
<dbReference type="GO" id="GO:0005886">
    <property type="term" value="C:plasma membrane"/>
    <property type="evidence" value="ECO:0007669"/>
    <property type="project" value="UniProtKB-SubCell"/>
</dbReference>
<dbReference type="GO" id="GO:0008495">
    <property type="term" value="F:protoheme IX farnesyltransferase activity"/>
    <property type="evidence" value="ECO:0007669"/>
    <property type="project" value="UniProtKB-UniRule"/>
</dbReference>
<dbReference type="GO" id="GO:0048034">
    <property type="term" value="P:heme O biosynthetic process"/>
    <property type="evidence" value="ECO:0007669"/>
    <property type="project" value="UniProtKB-UniRule"/>
</dbReference>
<dbReference type="CDD" id="cd13957">
    <property type="entry name" value="PT_UbiA_Cox10"/>
    <property type="match status" value="1"/>
</dbReference>
<dbReference type="FunFam" id="1.10.357.140:FF:000001">
    <property type="entry name" value="Protoheme IX farnesyltransferase"/>
    <property type="match status" value="1"/>
</dbReference>
<dbReference type="Gene3D" id="1.10.357.140">
    <property type="entry name" value="UbiA prenyltransferase"/>
    <property type="match status" value="1"/>
</dbReference>
<dbReference type="HAMAP" id="MF_00154">
    <property type="entry name" value="CyoE_CtaB"/>
    <property type="match status" value="1"/>
</dbReference>
<dbReference type="InterPro" id="IPR006369">
    <property type="entry name" value="Protohaem_IX_farnesylTrfase"/>
</dbReference>
<dbReference type="InterPro" id="IPR000537">
    <property type="entry name" value="UbiA_prenyltransferase"/>
</dbReference>
<dbReference type="InterPro" id="IPR030470">
    <property type="entry name" value="UbiA_prenylTrfase_CS"/>
</dbReference>
<dbReference type="InterPro" id="IPR044878">
    <property type="entry name" value="UbiA_sf"/>
</dbReference>
<dbReference type="NCBIfam" id="TIGR01473">
    <property type="entry name" value="cyoE_ctaB"/>
    <property type="match status" value="1"/>
</dbReference>
<dbReference type="NCBIfam" id="NF003348">
    <property type="entry name" value="PRK04375.1-1"/>
    <property type="match status" value="1"/>
</dbReference>
<dbReference type="PANTHER" id="PTHR43448">
    <property type="entry name" value="PROTOHEME IX FARNESYLTRANSFERASE, MITOCHONDRIAL"/>
    <property type="match status" value="1"/>
</dbReference>
<dbReference type="PANTHER" id="PTHR43448:SF2">
    <property type="entry name" value="PROTOHEME IX FARNESYLTRANSFERASE, MITOCHONDRIAL"/>
    <property type="match status" value="1"/>
</dbReference>
<dbReference type="Pfam" id="PF01040">
    <property type="entry name" value="UbiA"/>
    <property type="match status" value="1"/>
</dbReference>
<dbReference type="PROSITE" id="PS00943">
    <property type="entry name" value="UBIA"/>
    <property type="match status" value="1"/>
</dbReference>
<keyword id="KW-0997">Cell inner membrane</keyword>
<keyword id="KW-1003">Cell membrane</keyword>
<keyword id="KW-0350">Heme biosynthesis</keyword>
<keyword id="KW-0472">Membrane</keyword>
<keyword id="KW-0808">Transferase</keyword>
<keyword id="KW-0812">Transmembrane</keyword>
<keyword id="KW-1133">Transmembrane helix</keyword>
<gene>
    <name evidence="1" type="primary">cyoE</name>
    <name type="ordered locus">ASA_2957</name>
</gene>
<sequence>MKQYLQVTKPGIIFGNLISVIGGFLLASKGSLDVPLFILTMAGVSLVVASGCVFNNYIDRDIDCIMERTKNRALVRGLIAPGVSLWYASALGVAGIALLYWAANPLAALLAVLGFIVYVGVYSLYMKRHSVYGTLVGSLSGAAPPVIGYCAVSGQFDSGALILLAIFSLWQMPHSYAIAIFRFKDYQAANIPVLPVVKGIVVAKHHITLYILAFMVPTLMLFLGGYAGYKYLIVATAVSVWWLGMALSGYKQAVDDSLWARKLFMFSIVTITCLSVMMSVDFQPDATPVLVSMLP</sequence>
<comment type="function">
    <text evidence="1">Converts heme B (protoheme IX) to heme O by substitution of the vinyl group on carbon 2 of heme B porphyrin ring with a hydroxyethyl farnesyl side group.</text>
</comment>
<comment type="catalytic activity">
    <reaction evidence="1">
        <text>heme b + (2E,6E)-farnesyl diphosphate + H2O = Fe(II)-heme o + diphosphate</text>
        <dbReference type="Rhea" id="RHEA:28070"/>
        <dbReference type="ChEBI" id="CHEBI:15377"/>
        <dbReference type="ChEBI" id="CHEBI:33019"/>
        <dbReference type="ChEBI" id="CHEBI:60344"/>
        <dbReference type="ChEBI" id="CHEBI:60530"/>
        <dbReference type="ChEBI" id="CHEBI:175763"/>
        <dbReference type="EC" id="2.5.1.141"/>
    </reaction>
</comment>
<comment type="pathway">
    <text evidence="1">Porphyrin-containing compound metabolism; heme O biosynthesis; heme O from protoheme: step 1/1.</text>
</comment>
<comment type="subcellular location">
    <subcellularLocation>
        <location evidence="1">Cell inner membrane</location>
        <topology evidence="1">Multi-pass membrane protein</topology>
    </subcellularLocation>
</comment>
<comment type="miscellaneous">
    <text evidence="1">Carbon 2 of the heme B porphyrin ring is defined according to the Fischer nomenclature.</text>
</comment>
<comment type="similarity">
    <text evidence="1">Belongs to the UbiA prenyltransferase family. Protoheme IX farnesyltransferase subfamily.</text>
</comment>
<comment type="sequence caution" evidence="2">
    <conflict type="erroneous initiation">
        <sequence resource="EMBL-CDS" id="ABO90960"/>
    </conflict>
</comment>
<reference key="1">
    <citation type="journal article" date="2008" name="BMC Genomics">
        <title>The genome of Aeromonas salmonicida subsp. salmonicida A449: insights into the evolution of a fish pathogen.</title>
        <authorList>
            <person name="Reith M.E."/>
            <person name="Singh R.K."/>
            <person name="Curtis B."/>
            <person name="Boyd J.M."/>
            <person name="Bouevitch A."/>
            <person name="Kimball J."/>
            <person name="Munholland J."/>
            <person name="Murphy C."/>
            <person name="Sarty D."/>
            <person name="Williams J."/>
            <person name="Nash J.H."/>
            <person name="Johnson S.C."/>
            <person name="Brown L.L."/>
        </authorList>
    </citation>
    <scope>NUCLEOTIDE SEQUENCE [LARGE SCALE GENOMIC DNA]</scope>
    <source>
        <strain>A449</strain>
    </source>
</reference>
<proteinExistence type="inferred from homology"/>
<name>CYOE_AERS4</name>
<protein>
    <recommendedName>
        <fullName evidence="1">Protoheme IX farnesyltransferase</fullName>
        <ecNumber evidence="1">2.5.1.141</ecNumber>
    </recommendedName>
    <alternativeName>
        <fullName evidence="1">Heme B farnesyltransferase</fullName>
    </alternativeName>
    <alternativeName>
        <fullName evidence="1">Heme O synthase</fullName>
    </alternativeName>
</protein>
<evidence type="ECO:0000255" key="1">
    <source>
        <dbReference type="HAMAP-Rule" id="MF_00154"/>
    </source>
</evidence>
<evidence type="ECO:0000305" key="2"/>
<feature type="chain" id="PRO_0000326880" description="Protoheme IX farnesyltransferase">
    <location>
        <begin position="1"/>
        <end position="295"/>
    </location>
</feature>
<feature type="transmembrane region" description="Helical" evidence="1">
    <location>
        <begin position="7"/>
        <end position="27"/>
    </location>
</feature>
<feature type="transmembrane region" description="Helical" evidence="1">
    <location>
        <begin position="34"/>
        <end position="54"/>
    </location>
</feature>
<feature type="transmembrane region" description="Helical" evidence="1">
    <location>
        <begin position="78"/>
        <end position="98"/>
    </location>
</feature>
<feature type="transmembrane region" description="Helical" evidence="1">
    <location>
        <begin position="106"/>
        <end position="126"/>
    </location>
</feature>
<feature type="transmembrane region" description="Helical" evidence="1">
    <location>
        <begin position="131"/>
        <end position="151"/>
    </location>
</feature>
<feature type="transmembrane region" description="Helical" evidence="1">
    <location>
        <begin position="161"/>
        <end position="181"/>
    </location>
</feature>
<feature type="transmembrane region" description="Helical" evidence="1">
    <location>
        <begin position="207"/>
        <end position="227"/>
    </location>
</feature>
<feature type="transmembrane region" description="Helical" evidence="1">
    <location>
        <begin position="228"/>
        <end position="248"/>
    </location>
</feature>
<feature type="transmembrane region" description="Helical" evidence="1">
    <location>
        <begin position="263"/>
        <end position="283"/>
    </location>
</feature>
<accession>A4SPY8</accession>